<name>TOX2_BORPE</name>
<evidence type="ECO:0000305" key="1"/>
<evidence type="ECO:0007829" key="2">
    <source>
        <dbReference type="PDB" id="1BCP"/>
    </source>
</evidence>
<evidence type="ECO:0007829" key="3">
    <source>
        <dbReference type="PDB" id="6RO0"/>
    </source>
</evidence>
<comment type="function">
    <text>PTX oligomer B binds to receptors on the eukaryotic cell surface and facilitates the translocation of the toxic subunit across the cell membrane.</text>
</comment>
<comment type="subunit">
    <text>Pertussis toxin contains five different chains, S1-S5. They are organized into 2 functional subunits: A, composed of S1 (which is toxic) and B, containing S2, S3, S5, and two copies of S4 (B binds to the membrane receptors). Dimers of S2-S4 and S3-S4 are held together by S5.</text>
</comment>
<comment type="subcellular location">
    <subcellularLocation>
        <location>Secreted</location>
    </subcellularLocation>
    <subcellularLocation>
        <location evidence="1">Host cell membrane</location>
    </subcellularLocation>
</comment>
<comment type="similarity">
    <text evidence="1">Belongs to the pertussis toxin S2/S3 subunits family.</text>
</comment>
<gene>
    <name type="primary">ptxB</name>
    <name type="ordered locus">BP3784</name>
</gene>
<feature type="signal peptide">
    <location>
        <begin position="1"/>
        <end position="27"/>
    </location>
</feature>
<feature type="chain" id="PRO_0000019360" description="Pertussis toxin subunit 2">
    <location>
        <begin position="28"/>
        <end position="226"/>
    </location>
</feature>
<feature type="disulfide bond">
    <location>
        <begin position="50"/>
        <end position="114"/>
    </location>
</feature>
<feature type="disulfide bond">
    <location>
        <begin position="147"/>
        <end position="161"/>
    </location>
</feature>
<feature type="disulfide bond">
    <location>
        <begin position="219"/>
        <end position="226"/>
    </location>
</feature>
<feature type="sequence conflict" description="In Ref. 1 and 2." evidence="1" ref="1 2">
    <original>G</original>
    <variation>S</variation>
    <location>
        <position position="45"/>
    </location>
</feature>
<feature type="helix" evidence="3">
    <location>
        <begin position="37"/>
        <end position="39"/>
    </location>
</feature>
<feature type="helix" evidence="3">
    <location>
        <begin position="46"/>
        <end position="48"/>
    </location>
</feature>
<feature type="strand" evidence="3">
    <location>
        <begin position="54"/>
        <end position="56"/>
    </location>
</feature>
<feature type="helix" evidence="3">
    <location>
        <begin position="59"/>
        <end position="63"/>
    </location>
</feature>
<feature type="helix" evidence="3">
    <location>
        <begin position="66"/>
        <end position="75"/>
    </location>
</feature>
<feature type="strand" evidence="3">
    <location>
        <begin position="81"/>
        <end position="84"/>
    </location>
</feature>
<feature type="strand" evidence="3">
    <location>
        <begin position="87"/>
        <end position="90"/>
    </location>
</feature>
<feature type="helix" evidence="3">
    <location>
        <begin position="92"/>
        <end position="94"/>
    </location>
</feature>
<feature type="strand" evidence="3">
    <location>
        <begin position="96"/>
        <end position="100"/>
    </location>
</feature>
<feature type="turn" evidence="3">
    <location>
        <begin position="103"/>
        <end position="108"/>
    </location>
</feature>
<feature type="strand" evidence="3">
    <location>
        <begin position="114"/>
        <end position="120"/>
    </location>
</feature>
<feature type="strand" evidence="3">
    <location>
        <begin position="128"/>
        <end position="141"/>
    </location>
</feature>
<feature type="strand" evidence="3">
    <location>
        <begin position="146"/>
        <end position="152"/>
    </location>
</feature>
<feature type="strand" evidence="3">
    <location>
        <begin position="155"/>
        <end position="162"/>
    </location>
</feature>
<feature type="strand" evidence="3">
    <location>
        <begin position="164"/>
        <end position="167"/>
    </location>
</feature>
<feature type="helix" evidence="3">
    <location>
        <begin position="170"/>
        <end position="172"/>
    </location>
</feature>
<feature type="helix" evidence="3">
    <location>
        <begin position="173"/>
        <end position="186"/>
    </location>
</feature>
<feature type="strand" evidence="3">
    <location>
        <begin position="190"/>
        <end position="200"/>
    </location>
</feature>
<feature type="strand" evidence="2">
    <location>
        <begin position="203"/>
        <end position="205"/>
    </location>
</feature>
<feature type="strand" evidence="3">
    <location>
        <begin position="210"/>
        <end position="218"/>
    </location>
</feature>
<reference key="1">
    <citation type="journal article" date="1986" name="Proc. Natl. Acad. Sci. U.S.A.">
        <title>Cloning and sequencing of the pertussis toxin genes: operon structure and gene duplication.</title>
        <authorList>
            <person name="Nicosia A."/>
            <person name="Perugini M."/>
            <person name="Franzini C."/>
            <person name="Casagli M.C."/>
            <person name="Borri M.G."/>
            <person name="Antoni G."/>
            <person name="Almoni M."/>
            <person name="Neri P."/>
            <person name="Ratti G."/>
            <person name="Rappuoli R."/>
        </authorList>
    </citation>
    <scope>NUCLEOTIDE SEQUENCE [GENOMIC DNA]</scope>
    <source>
        <strain>BP165</strain>
    </source>
</reference>
<reference key="2">
    <citation type="journal article" date="1986" name="Science">
        <title>Pertussis toxin gene: nucleotide sequence and genetic organization.</title>
        <authorList>
            <person name="Locht C."/>
            <person name="Keith J.M."/>
        </authorList>
    </citation>
    <scope>NUCLEOTIDE SEQUENCE [GENOMIC DNA]</scope>
</reference>
<reference key="3">
    <citation type="journal article" date="2003" name="Nat. Genet.">
        <title>Comparative analysis of the genome sequences of Bordetella pertussis, Bordetella parapertussis and Bordetella bronchiseptica.</title>
        <authorList>
            <person name="Parkhill J."/>
            <person name="Sebaihia M."/>
            <person name="Preston A."/>
            <person name="Murphy L.D."/>
            <person name="Thomson N.R."/>
            <person name="Harris D.E."/>
            <person name="Holden M.T.G."/>
            <person name="Churcher C.M."/>
            <person name="Bentley S.D."/>
            <person name="Mungall K.L."/>
            <person name="Cerdeno-Tarraga A.-M."/>
            <person name="Temple L."/>
            <person name="James K.D."/>
            <person name="Harris B."/>
            <person name="Quail M.A."/>
            <person name="Achtman M."/>
            <person name="Atkin R."/>
            <person name="Baker S."/>
            <person name="Basham D."/>
            <person name="Bason N."/>
            <person name="Cherevach I."/>
            <person name="Chillingworth T."/>
            <person name="Collins M."/>
            <person name="Cronin A."/>
            <person name="Davis P."/>
            <person name="Doggett J."/>
            <person name="Feltwell T."/>
            <person name="Goble A."/>
            <person name="Hamlin N."/>
            <person name="Hauser H."/>
            <person name="Holroyd S."/>
            <person name="Jagels K."/>
            <person name="Leather S."/>
            <person name="Moule S."/>
            <person name="Norberczak H."/>
            <person name="O'Neil S."/>
            <person name="Ormond D."/>
            <person name="Price C."/>
            <person name="Rabbinowitsch E."/>
            <person name="Rutter S."/>
            <person name="Sanders M."/>
            <person name="Saunders D."/>
            <person name="Seeger K."/>
            <person name="Sharp S."/>
            <person name="Simmonds M."/>
            <person name="Skelton J."/>
            <person name="Squares R."/>
            <person name="Squares S."/>
            <person name="Stevens K."/>
            <person name="Unwin L."/>
            <person name="Whitehead S."/>
            <person name="Barrell B.G."/>
            <person name="Maskell D.J."/>
        </authorList>
    </citation>
    <scope>NUCLEOTIDE SEQUENCE [LARGE SCALE GENOMIC DNA]</scope>
    <source>
        <strain>Tohama I / ATCC BAA-589 / NCTC 13251</strain>
    </source>
</reference>
<reference key="4">
    <citation type="journal article" date="1994" name="Structure">
        <title>The crystal structure of pertussis toxin.</title>
        <authorList>
            <person name="Stein P.E."/>
            <person name="Boodhoo A."/>
            <person name="Armstrong G.D."/>
            <person name="Cockle S.A."/>
            <person name="Klein M.H."/>
            <person name="Read R.J."/>
        </authorList>
    </citation>
    <scope>X-RAY CRYSTALLOGRAPHY (2.9 ANGSTROMS)</scope>
    <source>
        <strain>10536</strain>
    </source>
</reference>
<reference key="5">
    <citation type="journal article" date="1996" name="J. Mol. Biol.">
        <title>Crystal structure of the pertussis toxin-ATP complex: a molecular sensor.</title>
        <authorList>
            <person name="Hazes B."/>
            <person name="Boodhoo A."/>
            <person name="Cockle S.A."/>
            <person name="Read R.J."/>
        </authorList>
    </citation>
    <scope>X-RAY CRYSTALLOGRAPHY (2.7 ANGSTROMS)</scope>
</reference>
<keyword id="KW-0002">3D-structure</keyword>
<keyword id="KW-1015">Disulfide bond</keyword>
<keyword id="KW-1032">Host cell membrane</keyword>
<keyword id="KW-1043">Host membrane</keyword>
<keyword id="KW-0472">Membrane</keyword>
<keyword id="KW-1185">Reference proteome</keyword>
<keyword id="KW-0964">Secreted</keyword>
<keyword id="KW-0732">Signal</keyword>
<keyword id="KW-0800">Toxin</keyword>
<keyword id="KW-0843">Virulence</keyword>
<keyword id="KW-0855">Whooping cough</keyword>
<accession>P04978</accession>
<dbReference type="EMBL" id="M14378">
    <property type="protein sequence ID" value="AAA83981.1"/>
    <property type="molecule type" value="Genomic_DNA"/>
</dbReference>
<dbReference type="EMBL" id="M13223">
    <property type="protein sequence ID" value="AAA22982.1"/>
    <property type="molecule type" value="Genomic_DNA"/>
</dbReference>
<dbReference type="EMBL" id="BX640422">
    <property type="protein sequence ID" value="CAE44039.1"/>
    <property type="molecule type" value="Genomic_DNA"/>
</dbReference>
<dbReference type="PIR" id="B24144">
    <property type="entry name" value="WEBR2P"/>
</dbReference>
<dbReference type="RefSeq" id="NP_882283.1">
    <property type="nucleotide sequence ID" value="NC_002929.2"/>
</dbReference>
<dbReference type="RefSeq" id="WP_010931649.1">
    <property type="nucleotide sequence ID" value="NZ_CP039022.1"/>
</dbReference>
<dbReference type="PDB" id="1BCP">
    <property type="method" value="X-ray"/>
    <property type="resolution" value="2.70 A"/>
    <property type="chains" value="B/H=28-226"/>
</dbReference>
<dbReference type="PDB" id="1PRT">
    <property type="method" value="X-ray"/>
    <property type="resolution" value="2.90 A"/>
    <property type="chains" value="B/H=31-226"/>
</dbReference>
<dbReference type="PDB" id="1PTO">
    <property type="method" value="X-ray"/>
    <property type="resolution" value="3.50 A"/>
    <property type="chains" value="B=31-226, H=29-226"/>
</dbReference>
<dbReference type="PDB" id="6RO0">
    <property type="method" value="X-ray"/>
    <property type="resolution" value="2.13 A"/>
    <property type="chains" value="B/H=1-226"/>
</dbReference>
<dbReference type="PDBsum" id="1BCP"/>
<dbReference type="PDBsum" id="1PRT"/>
<dbReference type="PDBsum" id="1PTO"/>
<dbReference type="PDBsum" id="6RO0"/>
<dbReference type="SMR" id="P04978"/>
<dbReference type="STRING" id="257313.BP3784"/>
<dbReference type="TCDB" id="1.C.72.1.1">
    <property type="family name" value="the pertussis toxin (ptx) family"/>
</dbReference>
<dbReference type="PaxDb" id="257313-BP3784"/>
<dbReference type="ABCD" id="P04978">
    <property type="antibodies" value="46 sequenced antibodies"/>
</dbReference>
<dbReference type="GeneID" id="69599991"/>
<dbReference type="KEGG" id="bpe:BP3784"/>
<dbReference type="PATRIC" id="fig|257313.5.peg.4088"/>
<dbReference type="HOGENOM" id="CLU_106184_0_0_4"/>
<dbReference type="EvolutionaryTrace" id="P04978"/>
<dbReference type="Proteomes" id="UP000002676">
    <property type="component" value="Chromosome"/>
</dbReference>
<dbReference type="GO" id="GO:0005576">
    <property type="term" value="C:extracellular region"/>
    <property type="evidence" value="ECO:0007669"/>
    <property type="project" value="UniProtKB-SubCell"/>
</dbReference>
<dbReference type="GO" id="GO:0020002">
    <property type="term" value="C:host cell plasma membrane"/>
    <property type="evidence" value="ECO:0007669"/>
    <property type="project" value="UniProtKB-SubCell"/>
</dbReference>
<dbReference type="GO" id="GO:0016020">
    <property type="term" value="C:membrane"/>
    <property type="evidence" value="ECO:0007669"/>
    <property type="project" value="UniProtKB-KW"/>
</dbReference>
<dbReference type="GO" id="GO:0090729">
    <property type="term" value="F:toxin activity"/>
    <property type="evidence" value="ECO:0007669"/>
    <property type="project" value="UniProtKB-KW"/>
</dbReference>
<dbReference type="GO" id="GO:0141071">
    <property type="term" value="P:symbiont-mediated activation of host MAPK cascade"/>
    <property type="evidence" value="ECO:0000269"/>
    <property type="project" value="SigSci"/>
</dbReference>
<dbReference type="Gene3D" id="2.40.50.110">
    <property type="match status" value="1"/>
</dbReference>
<dbReference type="Gene3D" id="3.10.40.10">
    <property type="entry name" value="Aerolysin/Pertussis toxin (APT), N-terminal domain"/>
    <property type="match status" value="1"/>
</dbReference>
<dbReference type="InterPro" id="IPR005138">
    <property type="entry name" value="APT_dom"/>
</dbReference>
<dbReference type="InterPro" id="IPR037015">
    <property type="entry name" value="APT_N_sf"/>
</dbReference>
<dbReference type="InterPro" id="IPR016187">
    <property type="entry name" value="CTDL_fold"/>
</dbReference>
<dbReference type="InterPro" id="IPR008992">
    <property type="entry name" value="Enterotoxin"/>
</dbReference>
<dbReference type="InterPro" id="IPR003899">
    <property type="entry name" value="ToxinB_BORPE"/>
</dbReference>
<dbReference type="InterPro" id="IPR020063">
    <property type="entry name" value="ToxinB_su2/3_C_BORPE"/>
</dbReference>
<dbReference type="Pfam" id="PF03440">
    <property type="entry name" value="APT"/>
    <property type="match status" value="1"/>
</dbReference>
<dbReference type="Pfam" id="PF02918">
    <property type="entry name" value="Pertussis_S2S3"/>
    <property type="match status" value="1"/>
</dbReference>
<dbReference type="PRINTS" id="PR01396">
    <property type="entry name" value="BORPETOXINB"/>
</dbReference>
<dbReference type="SUPFAM" id="SSF50203">
    <property type="entry name" value="Bacterial enterotoxins"/>
    <property type="match status" value="1"/>
</dbReference>
<dbReference type="SUPFAM" id="SSF56436">
    <property type="entry name" value="C-type lectin-like"/>
    <property type="match status" value="1"/>
</dbReference>
<proteinExistence type="evidence at protein level"/>
<sequence>MPIDRKTLCHLLSVLPLALLGSHVARASTPGIVIPPQEQITQHGGPYGRCANKTRALTVAELRGSGDLQEYLRHVTRGWSIFALYDGTYLGGEYGGVIKDGTPGGAFDLKTTFCIMTTRNTGQPATDHYYSNVTATRLLSSTNSRLCAVFVRSGQPVIGACTSPYDGKYWSMYSRLRKMLYLIYVAGISVRVHVSKEEQYYDYEDATFETYALTGISICNPGSSLC</sequence>
<protein>
    <recommendedName>
        <fullName>Pertussis toxin subunit 2</fullName>
        <shortName>PTX S2</shortName>
    </recommendedName>
    <alternativeName>
        <fullName>Islet-activating protein S2</fullName>
        <shortName>IAP S2</shortName>
    </alternativeName>
</protein>
<organism>
    <name type="scientific">Bordetella pertussis (strain Tohama I / ATCC BAA-589 / NCTC 13251)</name>
    <dbReference type="NCBI Taxonomy" id="257313"/>
    <lineage>
        <taxon>Bacteria</taxon>
        <taxon>Pseudomonadati</taxon>
        <taxon>Pseudomonadota</taxon>
        <taxon>Betaproteobacteria</taxon>
        <taxon>Burkholderiales</taxon>
        <taxon>Alcaligenaceae</taxon>
        <taxon>Bordetella</taxon>
    </lineage>
</organism>